<proteinExistence type="inferred from homology"/>
<dbReference type="EMBL" id="CP000254">
    <property type="protein sequence ID" value="ABD42708.1"/>
    <property type="molecule type" value="Genomic_DNA"/>
</dbReference>
<dbReference type="RefSeq" id="WP_011449959.1">
    <property type="nucleotide sequence ID" value="NC_007796.1"/>
</dbReference>
<dbReference type="SMR" id="Q2FS96"/>
<dbReference type="STRING" id="323259.Mhun_3021"/>
<dbReference type="EnsemblBacteria" id="ABD42708">
    <property type="protein sequence ID" value="ABD42708"/>
    <property type="gene ID" value="Mhun_3021"/>
</dbReference>
<dbReference type="GeneID" id="3922922"/>
<dbReference type="KEGG" id="mhu:Mhun_3021"/>
<dbReference type="eggNOG" id="arCOG01341">
    <property type="taxonomic scope" value="Archaea"/>
</dbReference>
<dbReference type="HOGENOM" id="CLU_091867_1_3_2"/>
<dbReference type="InParanoid" id="Q2FS96"/>
<dbReference type="OrthoDB" id="10045at2157"/>
<dbReference type="Proteomes" id="UP000001941">
    <property type="component" value="Chromosome"/>
</dbReference>
<dbReference type="GO" id="GO:0005737">
    <property type="term" value="C:cytoplasm"/>
    <property type="evidence" value="ECO:0007669"/>
    <property type="project" value="UniProtKB-SubCell"/>
</dbReference>
<dbReference type="GO" id="GO:0016272">
    <property type="term" value="C:prefoldin complex"/>
    <property type="evidence" value="ECO:0007669"/>
    <property type="project" value="UniProtKB-UniRule"/>
</dbReference>
<dbReference type="GO" id="GO:0051082">
    <property type="term" value="F:unfolded protein binding"/>
    <property type="evidence" value="ECO:0007669"/>
    <property type="project" value="UniProtKB-UniRule"/>
</dbReference>
<dbReference type="GO" id="GO:0006457">
    <property type="term" value="P:protein folding"/>
    <property type="evidence" value="ECO:0007669"/>
    <property type="project" value="UniProtKB-UniRule"/>
</dbReference>
<dbReference type="CDD" id="cd23160">
    <property type="entry name" value="Prefoldin_alpha_GimC"/>
    <property type="match status" value="1"/>
</dbReference>
<dbReference type="Gene3D" id="1.10.287.370">
    <property type="match status" value="1"/>
</dbReference>
<dbReference type="HAMAP" id="MF_00308">
    <property type="entry name" value="PfdA"/>
    <property type="match status" value="1"/>
</dbReference>
<dbReference type="InterPro" id="IPR011599">
    <property type="entry name" value="PFD_alpha_archaea"/>
</dbReference>
<dbReference type="InterPro" id="IPR009053">
    <property type="entry name" value="Prefoldin"/>
</dbReference>
<dbReference type="InterPro" id="IPR004127">
    <property type="entry name" value="Prefoldin_subunit_alpha"/>
</dbReference>
<dbReference type="NCBIfam" id="TIGR00293">
    <property type="entry name" value="prefoldin subunit alpha"/>
    <property type="match status" value="1"/>
</dbReference>
<dbReference type="PANTHER" id="PTHR12674">
    <property type="entry name" value="PREFOLDIN SUBUNIT 5"/>
    <property type="match status" value="1"/>
</dbReference>
<dbReference type="PANTHER" id="PTHR12674:SF2">
    <property type="entry name" value="PREFOLDIN SUBUNIT 5"/>
    <property type="match status" value="1"/>
</dbReference>
<dbReference type="Pfam" id="PF02996">
    <property type="entry name" value="Prefoldin"/>
    <property type="match status" value="1"/>
</dbReference>
<dbReference type="SUPFAM" id="SSF46579">
    <property type="entry name" value="Prefoldin"/>
    <property type="match status" value="1"/>
</dbReference>
<organism>
    <name type="scientific">Methanospirillum hungatei JF-1 (strain ATCC 27890 / DSM 864 / NBRC 100397 / JF-1)</name>
    <dbReference type="NCBI Taxonomy" id="323259"/>
    <lineage>
        <taxon>Archaea</taxon>
        <taxon>Methanobacteriati</taxon>
        <taxon>Methanobacteriota</taxon>
        <taxon>Stenosarchaea group</taxon>
        <taxon>Methanomicrobia</taxon>
        <taxon>Methanomicrobiales</taxon>
        <taxon>Methanospirillaceae</taxon>
        <taxon>Methanospirillum</taxon>
    </lineage>
</organism>
<accession>Q2FS96</accession>
<sequence>MAAPVDPREVQSLQTYLNQYTQQAEVYSRQLGMMEEGIREANASIETLKALAEAGEAPVFMPIGGGLNIRATIIQPDEVFVSIGSDIIVQKTNEGAISYLQDRIKEMEATAKNLTEVLQKIDAQVKDIQKRLEQLYRQAQAEQQGAGSL</sequence>
<gene>
    <name evidence="1" type="primary">pfdA</name>
    <name type="ordered locus">Mhun_3021</name>
</gene>
<reference key="1">
    <citation type="journal article" date="2016" name="Stand. Genomic Sci.">
        <title>Complete genome sequence of Methanospirillum hungatei type strain JF1.</title>
        <authorList>
            <person name="Gunsalus R.P."/>
            <person name="Cook L.E."/>
            <person name="Crable B."/>
            <person name="Rohlin L."/>
            <person name="McDonald E."/>
            <person name="Mouttaki H."/>
            <person name="Sieber J.R."/>
            <person name="Poweleit N."/>
            <person name="Zhou H."/>
            <person name="Lapidus A.L."/>
            <person name="Daligault H.E."/>
            <person name="Land M."/>
            <person name="Gilna P."/>
            <person name="Ivanova N."/>
            <person name="Kyrpides N."/>
            <person name="Culley D.E."/>
            <person name="McInerney M.J."/>
        </authorList>
    </citation>
    <scope>NUCLEOTIDE SEQUENCE [LARGE SCALE GENOMIC DNA]</scope>
    <source>
        <strain>ATCC 27890 / DSM 864 / NBRC 100397 / JF-1</strain>
    </source>
</reference>
<name>PFDA_METHJ</name>
<evidence type="ECO:0000255" key="1">
    <source>
        <dbReference type="HAMAP-Rule" id="MF_00308"/>
    </source>
</evidence>
<evidence type="ECO:0000305" key="2"/>
<protein>
    <recommendedName>
        <fullName evidence="1">Prefoldin subunit alpha</fullName>
    </recommendedName>
    <alternativeName>
        <fullName evidence="1">GimC subunit alpha</fullName>
    </alternativeName>
</protein>
<comment type="function">
    <text evidence="1">Molecular chaperone capable of stabilizing a range of proteins. Seems to fulfill an ATP-independent, HSP70-like function in archaeal de novo protein folding.</text>
</comment>
<comment type="subunit">
    <text evidence="1">Heterohexamer of two alpha and four beta subunits.</text>
</comment>
<comment type="subcellular location">
    <subcellularLocation>
        <location evidence="1">Cytoplasm</location>
    </subcellularLocation>
</comment>
<comment type="similarity">
    <text evidence="2">Belongs to the prefoldin subunit alpha family.</text>
</comment>
<feature type="chain" id="PRO_0000300767" description="Prefoldin subunit alpha">
    <location>
        <begin position="1"/>
        <end position="149"/>
    </location>
</feature>
<keyword id="KW-0143">Chaperone</keyword>
<keyword id="KW-0963">Cytoplasm</keyword>
<keyword id="KW-1185">Reference proteome</keyword>